<name>DGGGP_METTH</name>
<comment type="function">
    <text evidence="3">Prenyltransferase that catalyzes the transfer of the geranylgeranyl moiety of geranylgeranyl diphosphate (GGPP) to the C2 hydroxyl of (S)-3-O-geranylgeranylglyceryl phosphate (GGGP). This reaction is the second ether-bond-formation step in the biosynthesis of archaeal membrane lipids.</text>
</comment>
<comment type="catalytic activity">
    <reaction evidence="3">
        <text>sn-3-O-(geranylgeranyl)glycerol 1-phosphate + (2E,6E,10E)-geranylgeranyl diphosphate = 2,3-bis-O-(geranylgeranyl)-sn-glycerol 1-phosphate + diphosphate</text>
        <dbReference type="Rhea" id="RHEA:18109"/>
        <dbReference type="ChEBI" id="CHEBI:33019"/>
        <dbReference type="ChEBI" id="CHEBI:57677"/>
        <dbReference type="ChEBI" id="CHEBI:58756"/>
        <dbReference type="ChEBI" id="CHEBI:58837"/>
        <dbReference type="EC" id="2.5.1.42"/>
    </reaction>
</comment>
<comment type="cofactor">
    <cofactor evidence="1">
        <name>Mg(2+)</name>
        <dbReference type="ChEBI" id="CHEBI:18420"/>
    </cofactor>
</comment>
<comment type="pathway">
    <text>Membrane lipid metabolism; glycerophospholipid metabolism.</text>
</comment>
<comment type="subcellular location">
    <subcellularLocation>
        <location evidence="3">Cell membrane</location>
        <topology evidence="3">Multi-pass membrane protein</topology>
    </subcellularLocation>
</comment>
<comment type="similarity">
    <text evidence="4">Belongs to the UbiA prenyltransferase family. DGGGP synthase subfamily.</text>
</comment>
<protein>
    <recommendedName>
        <fullName>Digeranylgeranylglyceryl phosphate synthase</fullName>
        <shortName>DGGGP synthase</shortName>
        <shortName>DGGGPS</shortName>
        <ecNumber>2.5.1.42</ecNumber>
    </recommendedName>
    <alternativeName>
        <fullName>(S)-2,3-di-O-geranylgeranylglyceryl phosphate synthase</fullName>
    </alternativeName>
    <alternativeName>
        <fullName>Geranylgeranylglycerol-phosphate geranylgeranyltransferase</fullName>
    </alternativeName>
</protein>
<evidence type="ECO:0000250" key="1"/>
<evidence type="ECO:0000255" key="2"/>
<evidence type="ECO:0000269" key="3">
    <source ref="2"/>
</evidence>
<evidence type="ECO:0000305" key="4"/>
<organism>
    <name type="scientific">Methanothermobacter thermautotrophicus (strain ATCC 29096 / DSM 1053 / JCM 10044 / NBRC 100330 / Delta H)</name>
    <name type="common">Methanobacterium thermoautotrophicum</name>
    <dbReference type="NCBI Taxonomy" id="187420"/>
    <lineage>
        <taxon>Archaea</taxon>
        <taxon>Methanobacteriati</taxon>
        <taxon>Methanobacteriota</taxon>
        <taxon>Methanomada group</taxon>
        <taxon>Methanobacteria</taxon>
        <taxon>Methanobacteriales</taxon>
        <taxon>Methanobacteriaceae</taxon>
        <taxon>Methanothermobacter</taxon>
    </lineage>
</organism>
<proteinExistence type="evidence at protein level"/>
<reference key="1">
    <citation type="journal article" date="1997" name="J. Bacteriol.">
        <title>Complete genome sequence of Methanobacterium thermoautotrophicum deltaH: functional analysis and comparative genomics.</title>
        <authorList>
            <person name="Smith D.R."/>
            <person name="Doucette-Stamm L.A."/>
            <person name="Deloughery C."/>
            <person name="Lee H.-M."/>
            <person name="Dubois J."/>
            <person name="Aldredge T."/>
            <person name="Bashirzadeh R."/>
            <person name="Blakely D."/>
            <person name="Cook R."/>
            <person name="Gilbert K."/>
            <person name="Harrison D."/>
            <person name="Hoang L."/>
            <person name="Keagle P."/>
            <person name="Lumm W."/>
            <person name="Pothier B."/>
            <person name="Qiu D."/>
            <person name="Spadafora R."/>
            <person name="Vicare R."/>
            <person name="Wang Y."/>
            <person name="Wierzbowski J."/>
            <person name="Gibson R."/>
            <person name="Jiwani N."/>
            <person name="Caruso A."/>
            <person name="Bush D."/>
            <person name="Safer H."/>
            <person name="Patwell D."/>
            <person name="Prabhakar S."/>
            <person name="McDougall S."/>
            <person name="Shimer G."/>
            <person name="Goyal A."/>
            <person name="Pietrovski S."/>
            <person name="Church G.M."/>
            <person name="Daniels C.J."/>
            <person name="Mao J.-I."/>
            <person name="Rice P."/>
            <person name="Noelling J."/>
            <person name="Reeve J.N."/>
        </authorList>
    </citation>
    <scope>NUCLEOTIDE SEQUENCE [LARGE SCALE GENOMIC DNA]</scope>
    <source>
        <strain>ATCC 29096 / DSM 1053 / JCM 10044 / NBRC 100330 / Delta H</strain>
    </source>
</reference>
<reference key="2">
    <citation type="journal article" date="1993" name="J. Am. Chem. Soc.">
        <title>Biosynthesis of archaebacterial ether lipids. Formation of ether linkages by prenyltransferases.</title>
        <authorList>
            <person name="Zhang D."/>
            <person name="Poulter C.D."/>
        </authorList>
    </citation>
    <scope>FUNCTION</scope>
    <scope>CATALYTIC ACTIVITY</scope>
    <scope>SUBCELLULAR LOCATION</scope>
    <source>
        <strain>Marburg / DSM 2133</strain>
    </source>
</reference>
<keyword id="KW-1003">Cell membrane</keyword>
<keyword id="KW-0444">Lipid biosynthesis</keyword>
<keyword id="KW-0443">Lipid metabolism</keyword>
<keyword id="KW-0460">Magnesium</keyword>
<keyword id="KW-0472">Membrane</keyword>
<keyword id="KW-0594">Phospholipid biosynthesis</keyword>
<keyword id="KW-1208">Phospholipid metabolism</keyword>
<keyword id="KW-1185">Reference proteome</keyword>
<keyword id="KW-0808">Transferase</keyword>
<keyword id="KW-0812">Transmembrane</keyword>
<keyword id="KW-1133">Transmembrane helix</keyword>
<accession>O27170</accession>
<feature type="chain" id="PRO_0000350692" description="Digeranylgeranylglyceryl phosphate synthase">
    <location>
        <begin position="1"/>
        <end position="281"/>
    </location>
</feature>
<feature type="transmembrane region" description="Helical" evidence="2">
    <location>
        <begin position="7"/>
        <end position="27"/>
    </location>
</feature>
<feature type="transmembrane region" description="Helical" evidence="2">
    <location>
        <begin position="32"/>
        <end position="52"/>
    </location>
</feature>
<feature type="transmembrane region" description="Helical" evidence="2">
    <location>
        <begin position="72"/>
        <end position="91"/>
    </location>
</feature>
<feature type="transmembrane region" description="Helical" evidence="2">
    <location>
        <begin position="95"/>
        <end position="117"/>
    </location>
</feature>
<feature type="transmembrane region" description="Helical" evidence="2">
    <location>
        <begin position="128"/>
        <end position="148"/>
    </location>
</feature>
<feature type="transmembrane region" description="Helical" evidence="2">
    <location>
        <begin position="193"/>
        <end position="213"/>
    </location>
</feature>
<feature type="transmembrane region" description="Helical" evidence="2">
    <location>
        <begin position="214"/>
        <end position="234"/>
    </location>
</feature>
<feature type="transmembrane region" description="Helical" evidence="2">
    <location>
        <begin position="258"/>
        <end position="278"/>
    </location>
</feature>
<sequence length="281" mass="30132">MNPYIEILRPVNAVMAVITVMLMALITGRFDFSVLLASVVVFTATGAGNVINDYFDHEIDAINRPERPIPSGRISRGVAGVYSIILFALASLMGFYLGLLPGLVVVSSSLLMVYYAWRLKKRCLVGNITISFLTGLSFVFGGIVLGEVRASILLGFYAFLMTMAREIVKDMEDVEGDRAEGATTLPITHGMRISGVLAASFMLIASLTSPSLYLLGIFSALYIPVLLLAVAVFLRAAIMILRGQDRATASRVSRMIKVGMALTFIAFAAGSGTITALTGLS</sequence>
<dbReference type="EC" id="2.5.1.42"/>
<dbReference type="EMBL" id="AE000666">
    <property type="protein sequence ID" value="AAB85587.1"/>
    <property type="molecule type" value="Genomic_DNA"/>
</dbReference>
<dbReference type="PIR" id="H69012">
    <property type="entry name" value="H69012"/>
</dbReference>
<dbReference type="RefSeq" id="WP_010876722.1">
    <property type="nucleotide sequence ID" value="NC_000916.1"/>
</dbReference>
<dbReference type="SMR" id="O27170"/>
<dbReference type="FunCoup" id="O27170">
    <property type="interactions" value="82"/>
</dbReference>
<dbReference type="STRING" id="187420.MTH_1098"/>
<dbReference type="PaxDb" id="187420-MTH_1098"/>
<dbReference type="EnsemblBacteria" id="AAB85587">
    <property type="protein sequence ID" value="AAB85587"/>
    <property type="gene ID" value="MTH_1098"/>
</dbReference>
<dbReference type="GeneID" id="1471506"/>
<dbReference type="KEGG" id="mth:MTH_1098"/>
<dbReference type="PATRIC" id="fig|187420.15.peg.1076"/>
<dbReference type="HOGENOM" id="CLU_073311_1_1_2"/>
<dbReference type="InParanoid" id="O27170"/>
<dbReference type="BioCyc" id="MetaCyc:MONOMER-14509"/>
<dbReference type="UniPathway" id="UPA00940"/>
<dbReference type="Proteomes" id="UP000005223">
    <property type="component" value="Chromosome"/>
</dbReference>
<dbReference type="GO" id="GO:0005886">
    <property type="term" value="C:plasma membrane"/>
    <property type="evidence" value="ECO:0007669"/>
    <property type="project" value="UniProtKB-SubCell"/>
</dbReference>
<dbReference type="GO" id="GO:0047295">
    <property type="term" value="F:geranylgeranylglycerol-phosphate geranylgeranyltransferase activity"/>
    <property type="evidence" value="ECO:0007669"/>
    <property type="project" value="UniProtKB-UniRule"/>
</dbReference>
<dbReference type="GO" id="GO:0000287">
    <property type="term" value="F:magnesium ion binding"/>
    <property type="evidence" value="ECO:0007669"/>
    <property type="project" value="UniProtKB-UniRule"/>
</dbReference>
<dbReference type="GO" id="GO:0046474">
    <property type="term" value="P:glycerophospholipid biosynthetic process"/>
    <property type="evidence" value="ECO:0007669"/>
    <property type="project" value="UniProtKB-UniRule"/>
</dbReference>
<dbReference type="CDD" id="cd13961">
    <property type="entry name" value="PT_UbiA_DGGGPS"/>
    <property type="match status" value="1"/>
</dbReference>
<dbReference type="Gene3D" id="1.10.357.140">
    <property type="entry name" value="UbiA prenyltransferase"/>
    <property type="match status" value="1"/>
</dbReference>
<dbReference type="Gene3D" id="1.20.120.1780">
    <property type="entry name" value="UbiA prenyltransferase"/>
    <property type="match status" value="1"/>
</dbReference>
<dbReference type="HAMAP" id="MF_01286">
    <property type="entry name" value="DGGGP_synth"/>
    <property type="match status" value="1"/>
</dbReference>
<dbReference type="InterPro" id="IPR023547">
    <property type="entry name" value="DGGGP_synth"/>
</dbReference>
<dbReference type="InterPro" id="IPR050475">
    <property type="entry name" value="Prenyltransferase_related"/>
</dbReference>
<dbReference type="InterPro" id="IPR000537">
    <property type="entry name" value="UbiA_prenyltransferase"/>
</dbReference>
<dbReference type="InterPro" id="IPR044878">
    <property type="entry name" value="UbiA_sf"/>
</dbReference>
<dbReference type="NCBIfam" id="NF009523">
    <property type="entry name" value="PRK12884.1"/>
    <property type="match status" value="1"/>
</dbReference>
<dbReference type="PANTHER" id="PTHR42723">
    <property type="entry name" value="CHLOROPHYLL SYNTHASE"/>
    <property type="match status" value="1"/>
</dbReference>
<dbReference type="PANTHER" id="PTHR42723:SF1">
    <property type="entry name" value="CHLOROPHYLL SYNTHASE, CHLOROPLASTIC"/>
    <property type="match status" value="1"/>
</dbReference>
<dbReference type="Pfam" id="PF01040">
    <property type="entry name" value="UbiA"/>
    <property type="match status" value="1"/>
</dbReference>
<gene>
    <name type="ordered locus">MTH_1098</name>
</gene>